<name>PFKA_STRPC</name>
<comment type="function">
    <text evidence="1">Catalyzes the phosphorylation of D-fructose 6-phosphate to fructose 1,6-bisphosphate by ATP, the first committing step of glycolysis.</text>
</comment>
<comment type="catalytic activity">
    <reaction evidence="1">
        <text>beta-D-fructose 6-phosphate + ATP = beta-D-fructose 1,6-bisphosphate + ADP + H(+)</text>
        <dbReference type="Rhea" id="RHEA:16109"/>
        <dbReference type="ChEBI" id="CHEBI:15378"/>
        <dbReference type="ChEBI" id="CHEBI:30616"/>
        <dbReference type="ChEBI" id="CHEBI:32966"/>
        <dbReference type="ChEBI" id="CHEBI:57634"/>
        <dbReference type="ChEBI" id="CHEBI:456216"/>
        <dbReference type="EC" id="2.7.1.11"/>
    </reaction>
</comment>
<comment type="cofactor">
    <cofactor evidence="1">
        <name>Mg(2+)</name>
        <dbReference type="ChEBI" id="CHEBI:18420"/>
    </cofactor>
</comment>
<comment type="activity regulation">
    <text evidence="1">Allosterically activated by ADP and other diphosphonucleosides, and allosterically inhibited by phosphoenolpyruvate.</text>
</comment>
<comment type="pathway">
    <text evidence="1">Carbohydrate degradation; glycolysis; D-glyceraldehyde 3-phosphate and glycerone phosphate from D-glucose: step 3/4.</text>
</comment>
<comment type="subunit">
    <text evidence="1">Homotetramer.</text>
</comment>
<comment type="subcellular location">
    <subcellularLocation>
        <location evidence="1">Cytoplasm</location>
    </subcellularLocation>
</comment>
<comment type="similarity">
    <text evidence="1">Belongs to the phosphofructokinase type A (PFKA) family. ATP-dependent PFK group I subfamily. Prokaryotic clade 'B1' sub-subfamily.</text>
</comment>
<dbReference type="EC" id="2.7.1.11" evidence="1"/>
<dbReference type="EMBL" id="CP000259">
    <property type="protein sequence ID" value="ABF32280.1"/>
    <property type="molecule type" value="Genomic_DNA"/>
</dbReference>
<dbReference type="RefSeq" id="WP_002984444.1">
    <property type="nucleotide sequence ID" value="NC_008021.1"/>
</dbReference>
<dbReference type="SMR" id="Q1JLD9"/>
<dbReference type="GeneID" id="69900759"/>
<dbReference type="KEGG" id="spk:MGAS9429_Spy1093"/>
<dbReference type="HOGENOM" id="CLU_020655_0_1_9"/>
<dbReference type="UniPathway" id="UPA00109">
    <property type="reaction ID" value="UER00182"/>
</dbReference>
<dbReference type="Proteomes" id="UP000002433">
    <property type="component" value="Chromosome"/>
</dbReference>
<dbReference type="GO" id="GO:0005945">
    <property type="term" value="C:6-phosphofructokinase complex"/>
    <property type="evidence" value="ECO:0007669"/>
    <property type="project" value="TreeGrafter"/>
</dbReference>
<dbReference type="GO" id="GO:0003872">
    <property type="term" value="F:6-phosphofructokinase activity"/>
    <property type="evidence" value="ECO:0007669"/>
    <property type="project" value="UniProtKB-UniRule"/>
</dbReference>
<dbReference type="GO" id="GO:0016208">
    <property type="term" value="F:AMP binding"/>
    <property type="evidence" value="ECO:0007669"/>
    <property type="project" value="TreeGrafter"/>
</dbReference>
<dbReference type="GO" id="GO:0005524">
    <property type="term" value="F:ATP binding"/>
    <property type="evidence" value="ECO:0007669"/>
    <property type="project" value="UniProtKB-KW"/>
</dbReference>
<dbReference type="GO" id="GO:0070095">
    <property type="term" value="F:fructose-6-phosphate binding"/>
    <property type="evidence" value="ECO:0007669"/>
    <property type="project" value="TreeGrafter"/>
</dbReference>
<dbReference type="GO" id="GO:0042802">
    <property type="term" value="F:identical protein binding"/>
    <property type="evidence" value="ECO:0007669"/>
    <property type="project" value="TreeGrafter"/>
</dbReference>
<dbReference type="GO" id="GO:0046872">
    <property type="term" value="F:metal ion binding"/>
    <property type="evidence" value="ECO:0007669"/>
    <property type="project" value="UniProtKB-KW"/>
</dbReference>
<dbReference type="GO" id="GO:0048029">
    <property type="term" value="F:monosaccharide binding"/>
    <property type="evidence" value="ECO:0007669"/>
    <property type="project" value="TreeGrafter"/>
</dbReference>
<dbReference type="GO" id="GO:0061621">
    <property type="term" value="P:canonical glycolysis"/>
    <property type="evidence" value="ECO:0007669"/>
    <property type="project" value="TreeGrafter"/>
</dbReference>
<dbReference type="GO" id="GO:0030388">
    <property type="term" value="P:fructose 1,6-bisphosphate metabolic process"/>
    <property type="evidence" value="ECO:0007669"/>
    <property type="project" value="TreeGrafter"/>
</dbReference>
<dbReference type="GO" id="GO:0006002">
    <property type="term" value="P:fructose 6-phosphate metabolic process"/>
    <property type="evidence" value="ECO:0007669"/>
    <property type="project" value="InterPro"/>
</dbReference>
<dbReference type="FunFam" id="3.40.50.450:FF:000001">
    <property type="entry name" value="ATP-dependent 6-phosphofructokinase"/>
    <property type="match status" value="1"/>
</dbReference>
<dbReference type="FunFam" id="3.40.50.460:FF:000002">
    <property type="entry name" value="ATP-dependent 6-phosphofructokinase"/>
    <property type="match status" value="1"/>
</dbReference>
<dbReference type="Gene3D" id="3.40.50.450">
    <property type="match status" value="1"/>
</dbReference>
<dbReference type="Gene3D" id="3.40.50.460">
    <property type="entry name" value="Phosphofructokinase domain"/>
    <property type="match status" value="1"/>
</dbReference>
<dbReference type="HAMAP" id="MF_00339">
    <property type="entry name" value="Phosphofructokinase_I_B1"/>
    <property type="match status" value="1"/>
</dbReference>
<dbReference type="InterPro" id="IPR022953">
    <property type="entry name" value="ATP_PFK"/>
</dbReference>
<dbReference type="InterPro" id="IPR012003">
    <property type="entry name" value="ATP_PFK_prok-type"/>
</dbReference>
<dbReference type="InterPro" id="IPR012828">
    <property type="entry name" value="PFKA_ATP_prok"/>
</dbReference>
<dbReference type="InterPro" id="IPR015912">
    <property type="entry name" value="Phosphofructokinase_CS"/>
</dbReference>
<dbReference type="InterPro" id="IPR000023">
    <property type="entry name" value="Phosphofructokinase_dom"/>
</dbReference>
<dbReference type="InterPro" id="IPR035966">
    <property type="entry name" value="PKF_sf"/>
</dbReference>
<dbReference type="NCBIfam" id="TIGR02482">
    <property type="entry name" value="PFKA_ATP"/>
    <property type="match status" value="1"/>
</dbReference>
<dbReference type="NCBIfam" id="NF002872">
    <property type="entry name" value="PRK03202.1"/>
    <property type="match status" value="1"/>
</dbReference>
<dbReference type="PANTHER" id="PTHR13697:SF4">
    <property type="entry name" value="ATP-DEPENDENT 6-PHOSPHOFRUCTOKINASE"/>
    <property type="match status" value="1"/>
</dbReference>
<dbReference type="PANTHER" id="PTHR13697">
    <property type="entry name" value="PHOSPHOFRUCTOKINASE"/>
    <property type="match status" value="1"/>
</dbReference>
<dbReference type="Pfam" id="PF00365">
    <property type="entry name" value="PFK"/>
    <property type="match status" value="1"/>
</dbReference>
<dbReference type="PIRSF" id="PIRSF000532">
    <property type="entry name" value="ATP_PFK_prok"/>
    <property type="match status" value="1"/>
</dbReference>
<dbReference type="PRINTS" id="PR00476">
    <property type="entry name" value="PHFRCTKINASE"/>
</dbReference>
<dbReference type="SUPFAM" id="SSF53784">
    <property type="entry name" value="Phosphofructokinase"/>
    <property type="match status" value="1"/>
</dbReference>
<dbReference type="PROSITE" id="PS00433">
    <property type="entry name" value="PHOSPHOFRUCTOKINASE"/>
    <property type="match status" value="1"/>
</dbReference>
<reference key="1">
    <citation type="journal article" date="2006" name="Proc. Natl. Acad. Sci. U.S.A.">
        <title>Molecular genetic anatomy of inter- and intraserotype variation in the human bacterial pathogen group A Streptococcus.</title>
        <authorList>
            <person name="Beres S.B."/>
            <person name="Richter E.W."/>
            <person name="Nagiec M.J."/>
            <person name="Sumby P."/>
            <person name="Porcella S.F."/>
            <person name="DeLeo F.R."/>
            <person name="Musser J.M."/>
        </authorList>
    </citation>
    <scope>NUCLEOTIDE SEQUENCE [LARGE SCALE GENOMIC DNA]</scope>
    <source>
        <strain>MGAS9429</strain>
    </source>
</reference>
<gene>
    <name evidence="1" type="primary">pfkA</name>
    <name type="ordered locus">MGAS9429_Spy1093</name>
</gene>
<accession>Q1JLD9</accession>
<evidence type="ECO:0000255" key="1">
    <source>
        <dbReference type="HAMAP-Rule" id="MF_00339"/>
    </source>
</evidence>
<proteinExistence type="inferred from homology"/>
<keyword id="KW-0021">Allosteric enzyme</keyword>
<keyword id="KW-0067">ATP-binding</keyword>
<keyword id="KW-0963">Cytoplasm</keyword>
<keyword id="KW-0324">Glycolysis</keyword>
<keyword id="KW-0418">Kinase</keyword>
<keyword id="KW-0460">Magnesium</keyword>
<keyword id="KW-0479">Metal-binding</keyword>
<keyword id="KW-0547">Nucleotide-binding</keyword>
<keyword id="KW-0808">Transferase</keyword>
<protein>
    <recommendedName>
        <fullName evidence="1">ATP-dependent 6-phosphofructokinase</fullName>
        <shortName evidence="1">ATP-PFK</shortName>
        <shortName evidence="1">Phosphofructokinase</shortName>
        <ecNumber evidence="1">2.7.1.11</ecNumber>
    </recommendedName>
    <alternativeName>
        <fullName evidence="1">Phosphohexokinase</fullName>
    </alternativeName>
</protein>
<organism>
    <name type="scientific">Streptococcus pyogenes serotype M12 (strain MGAS9429)</name>
    <dbReference type="NCBI Taxonomy" id="370551"/>
    <lineage>
        <taxon>Bacteria</taxon>
        <taxon>Bacillati</taxon>
        <taxon>Bacillota</taxon>
        <taxon>Bacilli</taxon>
        <taxon>Lactobacillales</taxon>
        <taxon>Streptococcaceae</taxon>
        <taxon>Streptococcus</taxon>
    </lineage>
</organism>
<feature type="chain" id="PRO_1000059796" description="ATP-dependent 6-phosphofructokinase">
    <location>
        <begin position="1"/>
        <end position="337"/>
    </location>
</feature>
<feature type="active site" description="Proton acceptor" evidence="1">
    <location>
        <position position="127"/>
    </location>
</feature>
<feature type="binding site" evidence="1">
    <location>
        <position position="11"/>
    </location>
    <ligand>
        <name>ATP</name>
        <dbReference type="ChEBI" id="CHEBI:30616"/>
    </ligand>
</feature>
<feature type="binding site" evidence="1">
    <location>
        <begin position="21"/>
        <end position="25"/>
    </location>
    <ligand>
        <name>ADP</name>
        <dbReference type="ChEBI" id="CHEBI:456216"/>
        <note>allosteric activator; ligand shared between dimeric partners</note>
    </ligand>
</feature>
<feature type="binding site" evidence="1">
    <location>
        <begin position="72"/>
        <end position="73"/>
    </location>
    <ligand>
        <name>ATP</name>
        <dbReference type="ChEBI" id="CHEBI:30616"/>
    </ligand>
</feature>
<feature type="binding site" evidence="1">
    <location>
        <begin position="102"/>
        <end position="105"/>
    </location>
    <ligand>
        <name>ATP</name>
        <dbReference type="ChEBI" id="CHEBI:30616"/>
    </ligand>
</feature>
<feature type="binding site" evidence="1">
    <location>
        <position position="103"/>
    </location>
    <ligand>
        <name>Mg(2+)</name>
        <dbReference type="ChEBI" id="CHEBI:18420"/>
        <note>catalytic</note>
    </ligand>
</feature>
<feature type="binding site" description="in other chain" evidence="1">
    <location>
        <begin position="125"/>
        <end position="127"/>
    </location>
    <ligand>
        <name>substrate</name>
        <note>ligand shared between dimeric partners</note>
    </ligand>
</feature>
<feature type="binding site" description="in other chain" evidence="1">
    <location>
        <position position="154"/>
    </location>
    <ligand>
        <name>ADP</name>
        <dbReference type="ChEBI" id="CHEBI:456216"/>
        <note>allosteric activator; ligand shared between dimeric partners</note>
    </ligand>
</feature>
<feature type="binding site" evidence="1">
    <location>
        <position position="162"/>
    </location>
    <ligand>
        <name>substrate</name>
        <note>ligand shared between dimeric partners</note>
    </ligand>
</feature>
<feature type="binding site" description="in other chain" evidence="1">
    <location>
        <begin position="169"/>
        <end position="171"/>
    </location>
    <ligand>
        <name>substrate</name>
        <note>ligand shared between dimeric partners</note>
    </ligand>
</feature>
<feature type="binding site" description="in other chain" evidence="1">
    <location>
        <begin position="185"/>
        <end position="187"/>
    </location>
    <ligand>
        <name>ADP</name>
        <dbReference type="ChEBI" id="CHEBI:456216"/>
        <note>allosteric activator; ligand shared between dimeric partners</note>
    </ligand>
</feature>
<feature type="binding site" description="in other chain" evidence="1">
    <location>
        <position position="212"/>
    </location>
    <ligand>
        <name>ADP</name>
        <dbReference type="ChEBI" id="CHEBI:456216"/>
        <note>allosteric activator; ligand shared between dimeric partners</note>
    </ligand>
</feature>
<feature type="binding site" description="in other chain" evidence="1">
    <location>
        <begin position="214"/>
        <end position="216"/>
    </location>
    <ligand>
        <name>ADP</name>
        <dbReference type="ChEBI" id="CHEBI:456216"/>
        <note>allosteric activator; ligand shared between dimeric partners</note>
    </ligand>
</feature>
<feature type="binding site" description="in other chain" evidence="1">
    <location>
        <position position="223"/>
    </location>
    <ligand>
        <name>substrate</name>
        <note>ligand shared between dimeric partners</note>
    </ligand>
</feature>
<feature type="binding site" evidence="1">
    <location>
        <position position="245"/>
    </location>
    <ligand>
        <name>substrate</name>
        <note>ligand shared between dimeric partners</note>
    </ligand>
</feature>
<feature type="binding site" description="in other chain" evidence="1">
    <location>
        <begin position="251"/>
        <end position="254"/>
    </location>
    <ligand>
        <name>substrate</name>
        <note>ligand shared between dimeric partners</note>
    </ligand>
</feature>
<sequence>MKRIAVLTSGGDAPGMNAAIRAVVRKAISEGMEVYGINRGYAGMVDGDIFPLGSKEVGDKISRGGTFLYSARYPEFAQLEGQLAGIEQLKKHGIEGVVVIGGDGSYHGAMRLTEHGFPAVGIPGTIDNDIAGTDYTIGFDTAVNTAVEAIDKLRDTSSSHGRTFVVEVMGRNAGDIALWAGIASGADQIIVPEEEFDIEKVASTIQYDFEHKGKNHHIIVLAEGVMSGEAFAQKLKEAGDKSDLRVTNLGHILRGGSPTARDRVIASWMGSHAVELLKEGKGGLAVGIHNEELVESPILGTAEEGALFSLTEEGKIIVNNPHKARLDFAALNRSLSQ</sequence>